<protein>
    <recommendedName>
        <fullName>Phospholipase A2 inhibitor clone 11</fullName>
        <shortName>alpha-PLI</shortName>
    </recommendedName>
</protein>
<evidence type="ECO:0000250" key="1"/>
<evidence type="ECO:0000250" key="2">
    <source>
        <dbReference type="UniProtKB" id="A1XRN2"/>
    </source>
</evidence>
<evidence type="ECO:0000250" key="3">
    <source>
        <dbReference type="UniProtKB" id="P21755"/>
    </source>
</evidence>
<evidence type="ECO:0000255" key="4"/>
<evidence type="ECO:0000255" key="5">
    <source>
        <dbReference type="PROSITE-ProRule" id="PRU00040"/>
    </source>
</evidence>
<evidence type="ECO:0000305" key="6"/>
<evidence type="ECO:0000305" key="7">
    <source ref="1"/>
</evidence>
<reference key="1">
    <citation type="submission" date="2008-01" db="EMBL/GenBank/DDBJ databases">
        <title>A profile of the phospholipase A2 inhibitors of the alpha class prospected in Brazilian Crotalidae snakes: structural and phylogenetic analysis.</title>
        <authorList>
            <person name="Estevao-Costa M.I."/>
            <person name="Costa M.A.F."/>
            <person name="Mudado M.A."/>
            <person name="Franco G.R."/>
            <person name="Fortes-Dias C.L."/>
        </authorList>
    </citation>
    <scope>NUCLEOTIDE SEQUENCE [MRNA]</scope>
    <source>
        <tissue>Liver</tissue>
    </source>
</reference>
<sequence>MRLILLSGLLLLGIFLANGDEVDPDRKLLNSLIDALMHLQREFANLKGSFLIVHKARSFGSGSERMYVTNKEIKNFEALRQICEQADGHIPSPQLENQNKAFANVLERHGKEAYLVVGDSANFTNWAAGEPNKAAGACVKADTHGSWHSASCDDNLLVVCEFYFIL</sequence>
<keyword id="KW-0106">Calcium</keyword>
<keyword id="KW-1015">Disulfide bond</keyword>
<keyword id="KW-0325">Glycoprotein</keyword>
<keyword id="KW-0430">Lectin</keyword>
<keyword id="KW-0593">Phospholipase A2 inhibitor</keyword>
<keyword id="KW-0964">Secreted</keyword>
<keyword id="KW-0732">Signal</keyword>
<accession>B1A4Q5</accession>
<organism>
    <name type="scientific">Bothrops neuwiedi</name>
    <name type="common">Neuwied's lancehead</name>
    <dbReference type="NCBI Taxonomy" id="95648"/>
    <lineage>
        <taxon>Eukaryota</taxon>
        <taxon>Metazoa</taxon>
        <taxon>Chordata</taxon>
        <taxon>Craniata</taxon>
        <taxon>Vertebrata</taxon>
        <taxon>Euteleostomi</taxon>
        <taxon>Lepidosauria</taxon>
        <taxon>Squamata</taxon>
        <taxon>Bifurcata</taxon>
        <taxon>Unidentata</taxon>
        <taxon>Episquamata</taxon>
        <taxon>Toxicofera</taxon>
        <taxon>Serpentes</taxon>
        <taxon>Colubroidea</taxon>
        <taxon>Viperidae</taxon>
        <taxon>Crotalinae</taxon>
        <taxon>Bothrops</taxon>
    </lineage>
</organism>
<proteinExistence type="evidence at transcript level"/>
<dbReference type="EMBL" id="EU421929">
    <property type="protein sequence ID" value="ABZ82346.1"/>
    <property type="molecule type" value="mRNA"/>
</dbReference>
<dbReference type="SMR" id="B1A4Q5"/>
<dbReference type="GO" id="GO:0005576">
    <property type="term" value="C:extracellular region"/>
    <property type="evidence" value="ECO:0007669"/>
    <property type="project" value="UniProtKB-SubCell"/>
</dbReference>
<dbReference type="GO" id="GO:0030246">
    <property type="term" value="F:carbohydrate binding"/>
    <property type="evidence" value="ECO:0007669"/>
    <property type="project" value="UniProtKB-KW"/>
</dbReference>
<dbReference type="GO" id="GO:0019834">
    <property type="term" value="F:phospholipase A2 inhibitor activity"/>
    <property type="evidence" value="ECO:0007669"/>
    <property type="project" value="UniProtKB-KW"/>
</dbReference>
<dbReference type="Gene3D" id="3.10.100.10">
    <property type="entry name" value="Mannose-Binding Protein A, subunit A"/>
    <property type="match status" value="1"/>
</dbReference>
<dbReference type="InterPro" id="IPR001304">
    <property type="entry name" value="C-type_lectin-like"/>
</dbReference>
<dbReference type="InterPro" id="IPR016186">
    <property type="entry name" value="C-type_lectin-like/link_sf"/>
</dbReference>
<dbReference type="InterPro" id="IPR018378">
    <property type="entry name" value="C-type_lectin_CS"/>
</dbReference>
<dbReference type="InterPro" id="IPR016187">
    <property type="entry name" value="CTDL_fold"/>
</dbReference>
<dbReference type="Pfam" id="PF00059">
    <property type="entry name" value="Lectin_C"/>
    <property type="match status" value="1"/>
</dbReference>
<dbReference type="SUPFAM" id="SSF56436">
    <property type="entry name" value="C-type lectin-like"/>
    <property type="match status" value="1"/>
</dbReference>
<dbReference type="PROSITE" id="PS00615">
    <property type="entry name" value="C_TYPE_LECTIN_1"/>
    <property type="match status" value="1"/>
</dbReference>
<dbReference type="PROSITE" id="PS50041">
    <property type="entry name" value="C_TYPE_LECTIN_2"/>
    <property type="match status" value="1"/>
</dbReference>
<comment type="function">
    <text evidence="1">This phospholipase A2 inhibitor binds directly phospholipase A2 in the presence or absence of calcium.</text>
</comment>
<comment type="subunit">
    <text evidence="2">Homotrimer; non-covalently linked.</text>
</comment>
<comment type="subcellular location">
    <subcellularLocation>
        <location evidence="7">Secreted</location>
    </subcellularLocation>
    <text evidence="6">Secreted in plasma.</text>
</comment>
<comment type="tissue specificity">
    <text evidence="7">Expressed by the liver.</text>
</comment>
<comment type="similarity">
    <text evidence="6">Belongs to the alpha-type phospholipase A2 inhibitor family.</text>
</comment>
<feature type="signal peptide" evidence="1">
    <location>
        <begin position="1"/>
        <end position="19"/>
    </location>
</feature>
<feature type="chain" id="PRO_0000356348" description="Phospholipase A2 inhibitor clone 11">
    <location>
        <begin position="20"/>
        <end position="166"/>
    </location>
</feature>
<feature type="domain" description="C-type lectin" evidence="5">
    <location>
        <begin position="46"/>
        <end position="161"/>
    </location>
</feature>
<feature type="glycosylation site" description="N-linked (GlcNAc...) asparagine" evidence="4">
    <location>
        <position position="122"/>
    </location>
</feature>
<feature type="disulfide bond" evidence="3">
    <location>
        <begin position="83"/>
        <end position="160"/>
    </location>
</feature>
<feature type="disulfide bond" evidence="3">
    <location>
        <begin position="138"/>
        <end position="152"/>
    </location>
</feature>
<name>PLIAB_BOTNU</name>